<keyword id="KW-0067">ATP-binding</keyword>
<keyword id="KW-0378">Hydrolase</keyword>
<keyword id="KW-0460">Magnesium</keyword>
<keyword id="KW-0479">Metal-binding</keyword>
<keyword id="KW-0511">Multifunctional enzyme</keyword>
<keyword id="KW-0533">Nickel</keyword>
<keyword id="KW-0547">Nucleotide-binding</keyword>
<keyword id="KW-0548">Nucleotidyltransferase</keyword>
<keyword id="KW-0692">RNA repair</keyword>
<keyword id="KW-0694">RNA-binding</keyword>
<keyword id="KW-0808">Transferase</keyword>
<keyword id="KW-0819">tRNA processing</keyword>
<protein>
    <recommendedName>
        <fullName evidence="1">Multifunctional CCA protein</fullName>
    </recommendedName>
    <domain>
        <recommendedName>
            <fullName evidence="1">CCA-adding enzyme</fullName>
            <ecNumber evidence="1">2.7.7.72</ecNumber>
        </recommendedName>
        <alternativeName>
            <fullName evidence="1">CCA tRNA nucleotidyltransferase</fullName>
        </alternativeName>
        <alternativeName>
            <fullName evidence="1">tRNA CCA-pyrophosphorylase</fullName>
        </alternativeName>
        <alternativeName>
            <fullName evidence="1">tRNA adenylyl-/cytidylyl-transferase</fullName>
        </alternativeName>
        <alternativeName>
            <fullName evidence="1">tRNA nucleotidyltransferase</fullName>
        </alternativeName>
        <alternativeName>
            <fullName evidence="1">tRNA-NT</fullName>
        </alternativeName>
    </domain>
    <domain>
        <recommendedName>
            <fullName evidence="1">2'-nucleotidase</fullName>
            <ecNumber evidence="1">3.1.3.-</ecNumber>
        </recommendedName>
    </domain>
    <domain>
        <recommendedName>
            <fullName evidence="1">2',3'-cyclic phosphodiesterase</fullName>
            <ecNumber evidence="1">3.1.4.-</ecNumber>
        </recommendedName>
    </domain>
    <domain>
        <recommendedName>
            <fullName evidence="1">Phosphatase</fullName>
            <ecNumber evidence="1">3.1.3.-</ecNumber>
        </recommendedName>
    </domain>
</protein>
<sequence>MKIYLVGGAVRDALLGLSVKDRDWVVVGSTPQEMLDAGYQQVGRDFPVFLHPQTHEEYALARTERKSGSGYTGFTCYAAPDVTLEDDLKRRDLTINALAQDDNGEIIDPYNGLGDLQNRLLRHVSPAFGEDPLRVLRVARFAARYAHLGFRIADETLTLMREMTHAGELEHLTPERVWKETESALTTRNPQVFFQVLRDCGALRVLFPEIDALFGVPAPARWHPEIDTGIHTLMTLSMAAMLSPQVDVRFATLCHDLGKGLTPPELWPRHHGHGPAGVKLVEQLCQRLRVPNEIRDLARLVAEFHDLIHTFPMLNPKTIVKLFDSIDAWRKPQRVEQLALTSEADVRGRTGFESADYPQGRWLREGWEVAQSVPTKAVVEAGFKGVEIREELTRRRIAAVASWKEQRCPKPD</sequence>
<accession>Q0T0K7</accession>
<reference key="1">
    <citation type="journal article" date="2006" name="BMC Genomics">
        <title>Complete genome sequence of Shigella flexneri 5b and comparison with Shigella flexneri 2a.</title>
        <authorList>
            <person name="Nie H."/>
            <person name="Yang F."/>
            <person name="Zhang X."/>
            <person name="Yang J."/>
            <person name="Chen L."/>
            <person name="Wang J."/>
            <person name="Xiong Z."/>
            <person name="Peng J."/>
            <person name="Sun L."/>
            <person name="Dong J."/>
            <person name="Xue Y."/>
            <person name="Xu X."/>
            <person name="Chen S."/>
            <person name="Yao Z."/>
            <person name="Shen Y."/>
            <person name="Jin Q."/>
        </authorList>
    </citation>
    <scope>NUCLEOTIDE SEQUENCE [LARGE SCALE GENOMIC DNA]</scope>
    <source>
        <strain>8401</strain>
    </source>
</reference>
<feature type="chain" id="PRO_1000054301" description="Multifunctional CCA protein">
    <location>
        <begin position="1"/>
        <end position="412"/>
    </location>
</feature>
<feature type="domain" description="HD" evidence="1">
    <location>
        <begin position="228"/>
        <end position="329"/>
    </location>
</feature>
<feature type="binding site" evidence="1">
    <location>
        <position position="8"/>
    </location>
    <ligand>
        <name>ATP</name>
        <dbReference type="ChEBI" id="CHEBI:30616"/>
    </ligand>
</feature>
<feature type="binding site" evidence="1">
    <location>
        <position position="8"/>
    </location>
    <ligand>
        <name>CTP</name>
        <dbReference type="ChEBI" id="CHEBI:37563"/>
    </ligand>
</feature>
<feature type="binding site" evidence="1">
    <location>
        <position position="11"/>
    </location>
    <ligand>
        <name>ATP</name>
        <dbReference type="ChEBI" id="CHEBI:30616"/>
    </ligand>
</feature>
<feature type="binding site" evidence="1">
    <location>
        <position position="11"/>
    </location>
    <ligand>
        <name>CTP</name>
        <dbReference type="ChEBI" id="CHEBI:37563"/>
    </ligand>
</feature>
<feature type="binding site" evidence="1">
    <location>
        <position position="21"/>
    </location>
    <ligand>
        <name>Mg(2+)</name>
        <dbReference type="ChEBI" id="CHEBI:18420"/>
    </ligand>
</feature>
<feature type="binding site" evidence="1">
    <location>
        <position position="23"/>
    </location>
    <ligand>
        <name>Mg(2+)</name>
        <dbReference type="ChEBI" id="CHEBI:18420"/>
    </ligand>
</feature>
<feature type="binding site" evidence="1">
    <location>
        <position position="91"/>
    </location>
    <ligand>
        <name>ATP</name>
        <dbReference type="ChEBI" id="CHEBI:30616"/>
    </ligand>
</feature>
<feature type="binding site" evidence="1">
    <location>
        <position position="91"/>
    </location>
    <ligand>
        <name>CTP</name>
        <dbReference type="ChEBI" id="CHEBI:37563"/>
    </ligand>
</feature>
<feature type="binding site" evidence="1">
    <location>
        <position position="137"/>
    </location>
    <ligand>
        <name>ATP</name>
        <dbReference type="ChEBI" id="CHEBI:30616"/>
    </ligand>
</feature>
<feature type="binding site" evidence="1">
    <location>
        <position position="137"/>
    </location>
    <ligand>
        <name>CTP</name>
        <dbReference type="ChEBI" id="CHEBI:37563"/>
    </ligand>
</feature>
<feature type="binding site" evidence="1">
    <location>
        <position position="140"/>
    </location>
    <ligand>
        <name>ATP</name>
        <dbReference type="ChEBI" id="CHEBI:30616"/>
    </ligand>
</feature>
<feature type="binding site" evidence="1">
    <location>
        <position position="140"/>
    </location>
    <ligand>
        <name>CTP</name>
        <dbReference type="ChEBI" id="CHEBI:37563"/>
    </ligand>
</feature>
<dbReference type="EC" id="2.7.7.72" evidence="1"/>
<dbReference type="EC" id="3.1.3.-" evidence="1"/>
<dbReference type="EC" id="3.1.4.-" evidence="1"/>
<dbReference type="EMBL" id="CP000266">
    <property type="protein sequence ID" value="ABF05158.1"/>
    <property type="molecule type" value="Genomic_DNA"/>
</dbReference>
<dbReference type="RefSeq" id="WP_000708527.1">
    <property type="nucleotide sequence ID" value="NC_008258.1"/>
</dbReference>
<dbReference type="SMR" id="Q0T0K7"/>
<dbReference type="KEGG" id="sfv:SFV_3096"/>
<dbReference type="HOGENOM" id="CLU_015961_1_1_6"/>
<dbReference type="Proteomes" id="UP000000659">
    <property type="component" value="Chromosome"/>
</dbReference>
<dbReference type="GO" id="GO:0005524">
    <property type="term" value="F:ATP binding"/>
    <property type="evidence" value="ECO:0007669"/>
    <property type="project" value="UniProtKB-UniRule"/>
</dbReference>
<dbReference type="GO" id="GO:0004810">
    <property type="term" value="F:CCA tRNA nucleotidyltransferase activity"/>
    <property type="evidence" value="ECO:0007669"/>
    <property type="project" value="UniProtKB-UniRule"/>
</dbReference>
<dbReference type="GO" id="GO:0004112">
    <property type="term" value="F:cyclic-nucleotide phosphodiesterase activity"/>
    <property type="evidence" value="ECO:0007669"/>
    <property type="project" value="UniProtKB-UniRule"/>
</dbReference>
<dbReference type="GO" id="GO:0000287">
    <property type="term" value="F:magnesium ion binding"/>
    <property type="evidence" value="ECO:0007669"/>
    <property type="project" value="UniProtKB-UniRule"/>
</dbReference>
<dbReference type="GO" id="GO:0016791">
    <property type="term" value="F:phosphatase activity"/>
    <property type="evidence" value="ECO:0007669"/>
    <property type="project" value="UniProtKB-UniRule"/>
</dbReference>
<dbReference type="GO" id="GO:0000049">
    <property type="term" value="F:tRNA binding"/>
    <property type="evidence" value="ECO:0007669"/>
    <property type="project" value="UniProtKB-UniRule"/>
</dbReference>
<dbReference type="GO" id="GO:0042245">
    <property type="term" value="P:RNA repair"/>
    <property type="evidence" value="ECO:0007669"/>
    <property type="project" value="UniProtKB-KW"/>
</dbReference>
<dbReference type="GO" id="GO:0001680">
    <property type="term" value="P:tRNA 3'-terminal CCA addition"/>
    <property type="evidence" value="ECO:0007669"/>
    <property type="project" value="UniProtKB-UniRule"/>
</dbReference>
<dbReference type="CDD" id="cd00077">
    <property type="entry name" value="HDc"/>
    <property type="match status" value="1"/>
</dbReference>
<dbReference type="CDD" id="cd05398">
    <property type="entry name" value="NT_ClassII-CCAase"/>
    <property type="match status" value="1"/>
</dbReference>
<dbReference type="FunFam" id="1.10.3090.10:FF:000001">
    <property type="entry name" value="Multifunctional CCA protein"/>
    <property type="match status" value="1"/>
</dbReference>
<dbReference type="FunFam" id="3.30.460.10:FF:000016">
    <property type="entry name" value="Multifunctional CCA protein"/>
    <property type="match status" value="1"/>
</dbReference>
<dbReference type="Gene3D" id="3.30.460.10">
    <property type="entry name" value="Beta Polymerase, domain 2"/>
    <property type="match status" value="1"/>
</dbReference>
<dbReference type="Gene3D" id="1.10.3090.10">
    <property type="entry name" value="cca-adding enzyme, domain 2"/>
    <property type="match status" value="1"/>
</dbReference>
<dbReference type="HAMAP" id="MF_01261">
    <property type="entry name" value="CCA_bact_type1"/>
    <property type="match status" value="1"/>
</dbReference>
<dbReference type="HAMAP" id="MF_01262">
    <property type="entry name" value="CCA_bact_type2"/>
    <property type="match status" value="1"/>
</dbReference>
<dbReference type="InterPro" id="IPR012006">
    <property type="entry name" value="CCA_bact"/>
</dbReference>
<dbReference type="InterPro" id="IPR003607">
    <property type="entry name" value="HD/PDEase_dom"/>
</dbReference>
<dbReference type="InterPro" id="IPR006674">
    <property type="entry name" value="HD_domain"/>
</dbReference>
<dbReference type="InterPro" id="IPR043519">
    <property type="entry name" value="NT_sf"/>
</dbReference>
<dbReference type="InterPro" id="IPR002646">
    <property type="entry name" value="PolA_pol_head_dom"/>
</dbReference>
<dbReference type="InterPro" id="IPR032828">
    <property type="entry name" value="PolyA_RNA-bd"/>
</dbReference>
<dbReference type="InterPro" id="IPR050124">
    <property type="entry name" value="tRNA_CCA-adding_enzyme"/>
</dbReference>
<dbReference type="NCBIfam" id="NF008137">
    <property type="entry name" value="PRK10885.1"/>
    <property type="match status" value="1"/>
</dbReference>
<dbReference type="PANTHER" id="PTHR47545">
    <property type="entry name" value="MULTIFUNCTIONAL CCA PROTEIN"/>
    <property type="match status" value="1"/>
</dbReference>
<dbReference type="PANTHER" id="PTHR47545:SF1">
    <property type="entry name" value="MULTIFUNCTIONAL CCA PROTEIN"/>
    <property type="match status" value="1"/>
</dbReference>
<dbReference type="Pfam" id="PF01966">
    <property type="entry name" value="HD"/>
    <property type="match status" value="1"/>
</dbReference>
<dbReference type="Pfam" id="PF01743">
    <property type="entry name" value="PolyA_pol"/>
    <property type="match status" value="1"/>
</dbReference>
<dbReference type="Pfam" id="PF12627">
    <property type="entry name" value="PolyA_pol_RNAbd"/>
    <property type="match status" value="1"/>
</dbReference>
<dbReference type="PIRSF" id="PIRSF000813">
    <property type="entry name" value="CCA_bact"/>
    <property type="match status" value="1"/>
</dbReference>
<dbReference type="SUPFAM" id="SSF81301">
    <property type="entry name" value="Nucleotidyltransferase"/>
    <property type="match status" value="1"/>
</dbReference>
<dbReference type="SUPFAM" id="SSF81891">
    <property type="entry name" value="Poly A polymerase C-terminal region-like"/>
    <property type="match status" value="1"/>
</dbReference>
<dbReference type="PROSITE" id="PS51831">
    <property type="entry name" value="HD"/>
    <property type="match status" value="1"/>
</dbReference>
<name>CCA_SHIF8</name>
<comment type="function">
    <text evidence="1">Catalyzes the addition and repair of the essential 3'-terminal CCA sequence in tRNAs without using a nucleic acid template. Adds these three nucleotides in the order of C, C, and A to the tRNA nucleotide-73, using CTP and ATP as substrates and producing inorganic pyrophosphate. tRNA 3'-terminal CCA addition is required both for tRNA processing and repair. Also involved in tRNA surveillance by mediating tandem CCA addition to generate a CCACCA at the 3' terminus of unstable tRNAs. While stable tRNAs receive only 3'-terminal CCA, unstable tRNAs are marked with CCACCA and rapidly degraded.</text>
</comment>
<comment type="catalytic activity">
    <reaction evidence="1">
        <text>a tRNA precursor + 2 CTP + ATP = a tRNA with a 3' CCA end + 3 diphosphate</text>
        <dbReference type="Rhea" id="RHEA:14433"/>
        <dbReference type="Rhea" id="RHEA-COMP:10465"/>
        <dbReference type="Rhea" id="RHEA-COMP:10468"/>
        <dbReference type="ChEBI" id="CHEBI:30616"/>
        <dbReference type="ChEBI" id="CHEBI:33019"/>
        <dbReference type="ChEBI" id="CHEBI:37563"/>
        <dbReference type="ChEBI" id="CHEBI:74896"/>
        <dbReference type="ChEBI" id="CHEBI:83071"/>
        <dbReference type="EC" id="2.7.7.72"/>
    </reaction>
</comment>
<comment type="catalytic activity">
    <reaction evidence="1">
        <text>a tRNA with a 3' CCA end + 2 CTP + ATP = a tRNA with a 3' CCACCA end + 3 diphosphate</text>
        <dbReference type="Rhea" id="RHEA:76235"/>
        <dbReference type="Rhea" id="RHEA-COMP:10468"/>
        <dbReference type="Rhea" id="RHEA-COMP:18655"/>
        <dbReference type="ChEBI" id="CHEBI:30616"/>
        <dbReference type="ChEBI" id="CHEBI:33019"/>
        <dbReference type="ChEBI" id="CHEBI:37563"/>
        <dbReference type="ChEBI" id="CHEBI:83071"/>
        <dbReference type="ChEBI" id="CHEBI:195187"/>
    </reaction>
    <physiologicalReaction direction="left-to-right" evidence="1">
        <dbReference type="Rhea" id="RHEA:76236"/>
    </physiologicalReaction>
</comment>
<comment type="cofactor">
    <cofactor evidence="1">
        <name>Mg(2+)</name>
        <dbReference type="ChEBI" id="CHEBI:18420"/>
    </cofactor>
    <text evidence="1">Magnesium is required for nucleotidyltransferase activity.</text>
</comment>
<comment type="cofactor">
    <cofactor evidence="1">
        <name>Ni(2+)</name>
        <dbReference type="ChEBI" id="CHEBI:49786"/>
    </cofactor>
    <text evidence="1">Nickel for phosphatase activity.</text>
</comment>
<comment type="subunit">
    <text evidence="1">Monomer. Can also form homodimers and oligomers.</text>
</comment>
<comment type="domain">
    <text evidence="1">Comprises two domains: an N-terminal domain containing the nucleotidyltransferase activity and a C-terminal HD domain associated with both phosphodiesterase and phosphatase activities.</text>
</comment>
<comment type="miscellaneous">
    <text evidence="1">A single active site specifically recognizes both ATP and CTP and is responsible for their addition.</text>
</comment>
<comment type="similarity">
    <text evidence="1">Belongs to the tRNA nucleotidyltransferase/poly(A) polymerase family. Bacterial CCA-adding enzyme type 1 subfamily.</text>
</comment>
<organism>
    <name type="scientific">Shigella flexneri serotype 5b (strain 8401)</name>
    <dbReference type="NCBI Taxonomy" id="373384"/>
    <lineage>
        <taxon>Bacteria</taxon>
        <taxon>Pseudomonadati</taxon>
        <taxon>Pseudomonadota</taxon>
        <taxon>Gammaproteobacteria</taxon>
        <taxon>Enterobacterales</taxon>
        <taxon>Enterobacteriaceae</taxon>
        <taxon>Shigella</taxon>
    </lineage>
</organism>
<proteinExistence type="inferred from homology"/>
<gene>
    <name evidence="1" type="primary">cca</name>
    <name type="ordered locus">SFV_3096</name>
</gene>
<evidence type="ECO:0000255" key="1">
    <source>
        <dbReference type="HAMAP-Rule" id="MF_01261"/>
    </source>
</evidence>